<accession>P42721</accession>
<accession>Q7WWS4</accession>
<name>RBL1P_CUPNH</name>
<reference key="1">
    <citation type="journal article" date="1995" name="J. Bacteriol.">
        <title>Characterization of the duplicate ribulose-1,5-bisphosphate carboxylase genes and cbb promoters of Alcaligenes eutrophus.</title>
        <authorList>
            <person name="Kusian B."/>
            <person name="Bednarski R."/>
            <person name="Husemann M."/>
            <person name="Bowien B."/>
        </authorList>
    </citation>
    <scope>NUCLEOTIDE SEQUENCE [GENOMIC DNA]</scope>
    <scope>EXPRESSION UNDER DIFFERENT GROWTH CONDITIONS</scope>
</reference>
<reference key="2">
    <citation type="journal article" date="2003" name="J. Mol. Biol.">
        <title>Complete nucleotide sequence of pHG1: a Ralstonia eutropha H16 megaplasmid encoding key enzymes of H(2)-based lithoautotrophy and anaerobiosis.</title>
        <authorList>
            <person name="Schwartz E."/>
            <person name="Henne A."/>
            <person name="Cramm R."/>
            <person name="Eitinger T."/>
            <person name="Friedrich B."/>
            <person name="Gottschalk G."/>
        </authorList>
    </citation>
    <scope>NUCLEOTIDE SEQUENCE [LARGE SCALE GENOMIC DNA]</scope>
    <source>
        <strain>ATCC 17699 / DSM 428 / KCTC 22496 / NCIMB 10442 / H16 / Stanier 337</strain>
    </source>
</reference>
<reference key="3">
    <citation type="journal article" date="1991" name="Mol. Microbiol.">
        <title>Identification of cfxR, an activator gene of autotrophic CO2 fixation in Alcaligenes eutrophus.</title>
        <authorList>
            <person name="Windhoevel U."/>
            <person name="Bowien B."/>
        </authorList>
    </citation>
    <scope>NUCLEOTIDE SEQUENCE [GENOMIC DNA] OF 1-10</scope>
</reference>
<feature type="chain" id="PRO_0000062642" description="Ribulose bisphosphate carboxylase large chain, plasmid">
    <location>
        <begin position="1"/>
        <end position="486"/>
    </location>
</feature>
<feature type="active site" description="Proton acceptor" evidence="1">
    <location>
        <position position="178"/>
    </location>
</feature>
<feature type="active site" description="Proton acceptor" evidence="1">
    <location>
        <position position="296"/>
    </location>
</feature>
<feature type="binding site" description="in homodimeric partner" evidence="1">
    <location>
        <position position="126"/>
    </location>
    <ligand>
        <name>substrate</name>
    </ligand>
</feature>
<feature type="binding site" evidence="1">
    <location>
        <position position="176"/>
    </location>
    <ligand>
        <name>substrate</name>
    </ligand>
</feature>
<feature type="binding site" evidence="1">
    <location>
        <position position="180"/>
    </location>
    <ligand>
        <name>substrate</name>
    </ligand>
</feature>
<feature type="binding site" description="via carbamate group" evidence="1">
    <location>
        <position position="204"/>
    </location>
    <ligand>
        <name>Mg(2+)</name>
        <dbReference type="ChEBI" id="CHEBI:18420"/>
    </ligand>
</feature>
<feature type="binding site" evidence="1">
    <location>
        <position position="206"/>
    </location>
    <ligand>
        <name>Mg(2+)</name>
        <dbReference type="ChEBI" id="CHEBI:18420"/>
    </ligand>
</feature>
<feature type="binding site" evidence="1">
    <location>
        <position position="207"/>
    </location>
    <ligand>
        <name>Mg(2+)</name>
        <dbReference type="ChEBI" id="CHEBI:18420"/>
    </ligand>
</feature>
<feature type="binding site" evidence="1">
    <location>
        <position position="297"/>
    </location>
    <ligand>
        <name>substrate</name>
    </ligand>
</feature>
<feature type="binding site" evidence="1">
    <location>
        <position position="329"/>
    </location>
    <ligand>
        <name>substrate</name>
    </ligand>
</feature>
<feature type="binding site" evidence="1">
    <location>
        <position position="381"/>
    </location>
    <ligand>
        <name>substrate</name>
    </ligand>
</feature>
<feature type="site" description="Transition state stabilizer" evidence="1">
    <location>
        <position position="336"/>
    </location>
</feature>
<feature type="modified residue" description="N6-carboxylysine" evidence="1">
    <location>
        <position position="204"/>
    </location>
</feature>
<feature type="sequence conflict" description="In Ref. 1; AAA83747." evidence="2" ref="1">
    <original>G</original>
    <variation>R</variation>
    <location>
        <position position="198"/>
    </location>
</feature>
<geneLocation type="plasmid">
    <name>megaplasmid pHG1</name>
</geneLocation>
<gene>
    <name type="primary">cbbL2</name>
    <name type="synonym">cbbL</name>
    <name type="synonym">cbxLP</name>
    <name type="synonym">cfxLP</name>
    <name type="ordered locus">PHG427</name>
</gene>
<comment type="function">
    <text>RuBisCO catalyzes two reactions: the carboxylation of D-ribulose 1,5-bisphosphate, the primary event in carbon dioxide fixation, as well as the oxidative fragmentation of the pentose substrate. Both reactions occur simultaneously and in competition at the same active site.</text>
</comment>
<comment type="catalytic activity">
    <reaction>
        <text>2 (2R)-3-phosphoglycerate + 2 H(+) = D-ribulose 1,5-bisphosphate + CO2 + H2O</text>
        <dbReference type="Rhea" id="RHEA:23124"/>
        <dbReference type="ChEBI" id="CHEBI:15377"/>
        <dbReference type="ChEBI" id="CHEBI:15378"/>
        <dbReference type="ChEBI" id="CHEBI:16526"/>
        <dbReference type="ChEBI" id="CHEBI:57870"/>
        <dbReference type="ChEBI" id="CHEBI:58272"/>
        <dbReference type="EC" id="4.1.1.39"/>
    </reaction>
</comment>
<comment type="catalytic activity">
    <reaction>
        <text>D-ribulose 1,5-bisphosphate + O2 = 2-phosphoglycolate + (2R)-3-phosphoglycerate + 2 H(+)</text>
        <dbReference type="Rhea" id="RHEA:36631"/>
        <dbReference type="ChEBI" id="CHEBI:15378"/>
        <dbReference type="ChEBI" id="CHEBI:15379"/>
        <dbReference type="ChEBI" id="CHEBI:57870"/>
        <dbReference type="ChEBI" id="CHEBI:58033"/>
        <dbReference type="ChEBI" id="CHEBI:58272"/>
    </reaction>
</comment>
<comment type="cofactor">
    <cofactor evidence="1">
        <name>Mg(2+)</name>
        <dbReference type="ChEBI" id="CHEBI:18420"/>
    </cofactor>
    <text evidence="1">Binds 1 Mg(2+) ion per subunit.</text>
</comment>
<comment type="subunit">
    <text evidence="1">Heterohexadecamer of 8 large chains and 8 small chains.</text>
</comment>
<comment type="induction">
    <text>Total RuBisCO activity (both chromosome and plasmid-derived enzyme) is high under lithoautotrophic growth conditions, intermediate when grown on fructose and poor when grown on pyruvate.</text>
</comment>
<comment type="miscellaneous">
    <text evidence="1">The basic functional RuBisCO is composed of a large chain homodimer in a 'head-to-tail' conformation. In form I RuBisCO this homodimer is arranged in a barrel-like tetramer with the small subunits forming a tetrameric 'cap' on each end of the 'barrel' (By similarity).</text>
</comment>
<comment type="similarity">
    <text evidence="2">Belongs to the RuBisCO large chain family. Type I subfamily.</text>
</comment>
<evidence type="ECO:0000250" key="1"/>
<evidence type="ECO:0000305" key="2"/>
<sequence>MNAPESVQAKPRKRYDAGVMKYKEMGYWDGDYEPKDTDLLALFRITPQDGVDPVEAAAAVAGESSTATWTVVWTDRLTACDMYRAKAYRVDPVPNNPEQFFCYVAYDLSLFEEGSIANLTASIIGNVFSFKPIKAARLEDMRFPVAYVKTFAGPSTGIIVERERLDKFGRPLLGATTKPKLGLSGRNYGRVVYEGLKGGLDFMKDDENINSQPFMHWRDRFLFVMDAVNKASAATGEVKGSYLNVTAGTMEEMYRRAEFAKSLGSVVIMIDLIVGWTCIQSMSNWCRQNDMILHLHRAGHGTYTRQKNHGVSFRVIAKWLRLAGVDHMHTGTAVGKLEGDPLTVQGYYNVCRDAYTHTDLTRGLFFDQDWASLRKVMPVASGGIHAGQMHQLIHLFGDDVVLQFGGGTIGHPQGIQAGATANRVALEAMVLARNEGRDILNEGPEILRDAARWCGPLRAALDTWGDISFNYTPTDTSDFAPTASVA</sequence>
<keyword id="KW-0113">Calvin cycle</keyword>
<keyword id="KW-0120">Carbon dioxide fixation</keyword>
<keyword id="KW-0456">Lyase</keyword>
<keyword id="KW-0460">Magnesium</keyword>
<keyword id="KW-0479">Metal-binding</keyword>
<keyword id="KW-0503">Monooxygenase</keyword>
<keyword id="KW-0560">Oxidoreductase</keyword>
<keyword id="KW-0614">Plasmid</keyword>
<keyword id="KW-1185">Reference proteome</keyword>
<protein>
    <recommendedName>
        <fullName>Ribulose bisphosphate carboxylase large chain, plasmid</fullName>
        <shortName>RuBisCO large subunit</shortName>
        <ecNumber>4.1.1.39</ecNumber>
    </recommendedName>
</protein>
<organism>
    <name type="scientific">Cupriavidus necator (strain ATCC 17699 / DSM 428 / KCTC 22496 / NCIMB 10442 / H16 / Stanier 337)</name>
    <name type="common">Ralstonia eutropha</name>
    <dbReference type="NCBI Taxonomy" id="381666"/>
    <lineage>
        <taxon>Bacteria</taxon>
        <taxon>Pseudomonadati</taxon>
        <taxon>Pseudomonadota</taxon>
        <taxon>Betaproteobacteria</taxon>
        <taxon>Burkholderiales</taxon>
        <taxon>Burkholderiaceae</taxon>
        <taxon>Cupriavidus</taxon>
    </lineage>
</organism>
<proteinExistence type="evidence at transcript level"/>
<dbReference type="EC" id="4.1.1.39"/>
<dbReference type="EMBL" id="U20585">
    <property type="protein sequence ID" value="AAA83747.1"/>
    <property type="molecule type" value="Genomic_DNA"/>
</dbReference>
<dbReference type="EMBL" id="AY305378">
    <property type="protein sequence ID" value="AAP86176.1"/>
    <property type="molecule type" value="Genomic_DNA"/>
</dbReference>
<dbReference type="EMBL" id="M65064">
    <property type="protein sequence ID" value="AAA21980.1"/>
    <property type="molecule type" value="Genomic_DNA"/>
</dbReference>
<dbReference type="PIR" id="I39559">
    <property type="entry name" value="I39559"/>
</dbReference>
<dbReference type="RefSeq" id="WP_011154339.1">
    <property type="nucleotide sequence ID" value="NC_005241.1"/>
</dbReference>
<dbReference type="SMR" id="P42721"/>
<dbReference type="KEGG" id="reh:PHG427"/>
<dbReference type="PATRIC" id="fig|381666.6.peg.355"/>
<dbReference type="eggNOG" id="COG1850">
    <property type="taxonomic scope" value="Bacteria"/>
</dbReference>
<dbReference type="HOGENOM" id="CLU_031450_2_0_4"/>
<dbReference type="OrthoDB" id="9770811at2"/>
<dbReference type="Proteomes" id="UP000008210">
    <property type="component" value="Plasmid megaplasmid pHG1"/>
</dbReference>
<dbReference type="GO" id="GO:0000287">
    <property type="term" value="F:magnesium ion binding"/>
    <property type="evidence" value="ECO:0007669"/>
    <property type="project" value="UniProtKB-UniRule"/>
</dbReference>
<dbReference type="GO" id="GO:0004497">
    <property type="term" value="F:monooxygenase activity"/>
    <property type="evidence" value="ECO:0007669"/>
    <property type="project" value="UniProtKB-KW"/>
</dbReference>
<dbReference type="GO" id="GO:0016984">
    <property type="term" value="F:ribulose-bisphosphate carboxylase activity"/>
    <property type="evidence" value="ECO:0007669"/>
    <property type="project" value="UniProtKB-UniRule"/>
</dbReference>
<dbReference type="GO" id="GO:0019253">
    <property type="term" value="P:reductive pentose-phosphate cycle"/>
    <property type="evidence" value="ECO:0007669"/>
    <property type="project" value="UniProtKB-UniRule"/>
</dbReference>
<dbReference type="CDD" id="cd08212">
    <property type="entry name" value="RuBisCO_large_I"/>
    <property type="match status" value="1"/>
</dbReference>
<dbReference type="Gene3D" id="3.20.20.110">
    <property type="entry name" value="Ribulose bisphosphate carboxylase, large subunit, C-terminal domain"/>
    <property type="match status" value="1"/>
</dbReference>
<dbReference type="Gene3D" id="3.30.70.150">
    <property type="entry name" value="RuBisCO large subunit, N-terminal domain"/>
    <property type="match status" value="1"/>
</dbReference>
<dbReference type="HAMAP" id="MF_01338">
    <property type="entry name" value="RuBisCO_L_type1"/>
    <property type="match status" value="1"/>
</dbReference>
<dbReference type="InterPro" id="IPR033966">
    <property type="entry name" value="RuBisCO"/>
</dbReference>
<dbReference type="InterPro" id="IPR020878">
    <property type="entry name" value="RuBisCo_large_chain_AS"/>
</dbReference>
<dbReference type="InterPro" id="IPR000685">
    <property type="entry name" value="RuBisCO_lsu_C"/>
</dbReference>
<dbReference type="InterPro" id="IPR036376">
    <property type="entry name" value="RuBisCO_lsu_C_sf"/>
</dbReference>
<dbReference type="InterPro" id="IPR017443">
    <property type="entry name" value="RuBisCO_lsu_fd_N"/>
</dbReference>
<dbReference type="InterPro" id="IPR036422">
    <property type="entry name" value="RuBisCO_lsu_N_sf"/>
</dbReference>
<dbReference type="InterPro" id="IPR020888">
    <property type="entry name" value="RuBisCO_lsuI"/>
</dbReference>
<dbReference type="NCBIfam" id="NF003252">
    <property type="entry name" value="PRK04208.1"/>
    <property type="match status" value="1"/>
</dbReference>
<dbReference type="PANTHER" id="PTHR42704">
    <property type="entry name" value="RIBULOSE BISPHOSPHATE CARBOXYLASE"/>
    <property type="match status" value="1"/>
</dbReference>
<dbReference type="PANTHER" id="PTHR42704:SF17">
    <property type="entry name" value="RIBULOSE BISPHOSPHATE CARBOXYLASE LARGE CHAIN"/>
    <property type="match status" value="1"/>
</dbReference>
<dbReference type="Pfam" id="PF00016">
    <property type="entry name" value="RuBisCO_large"/>
    <property type="match status" value="1"/>
</dbReference>
<dbReference type="Pfam" id="PF02788">
    <property type="entry name" value="RuBisCO_large_N"/>
    <property type="match status" value="1"/>
</dbReference>
<dbReference type="SFLD" id="SFLDG01052">
    <property type="entry name" value="RuBisCO"/>
    <property type="match status" value="1"/>
</dbReference>
<dbReference type="SFLD" id="SFLDS00014">
    <property type="entry name" value="RuBisCO"/>
    <property type="match status" value="1"/>
</dbReference>
<dbReference type="SFLD" id="SFLDG00301">
    <property type="entry name" value="RuBisCO-like_proteins"/>
    <property type="match status" value="1"/>
</dbReference>
<dbReference type="SUPFAM" id="SSF51649">
    <property type="entry name" value="RuBisCo, C-terminal domain"/>
    <property type="match status" value="1"/>
</dbReference>
<dbReference type="SUPFAM" id="SSF54966">
    <property type="entry name" value="RuBisCO, large subunit, small (N-terminal) domain"/>
    <property type="match status" value="1"/>
</dbReference>
<dbReference type="PROSITE" id="PS00157">
    <property type="entry name" value="RUBISCO_LARGE"/>
    <property type="match status" value="1"/>
</dbReference>